<organism>
    <name type="scientific">Treponema pallidum (strain Nichols)</name>
    <dbReference type="NCBI Taxonomy" id="243276"/>
    <lineage>
        <taxon>Bacteria</taxon>
        <taxon>Pseudomonadati</taxon>
        <taxon>Spirochaetota</taxon>
        <taxon>Spirochaetia</taxon>
        <taxon>Spirochaetales</taxon>
        <taxon>Treponemataceae</taxon>
        <taxon>Treponema</taxon>
    </lineage>
</organism>
<dbReference type="EC" id="2.7.1.148" evidence="1"/>
<dbReference type="EMBL" id="AE000520">
    <property type="protein sequence ID" value="AAC65356.1"/>
    <property type="molecule type" value="Genomic_DNA"/>
</dbReference>
<dbReference type="PIR" id="B71333">
    <property type="entry name" value="B71333"/>
</dbReference>
<dbReference type="RefSeq" id="WP_010881819.1">
    <property type="nucleotide sequence ID" value="NC_000919.1"/>
</dbReference>
<dbReference type="IntAct" id="O83386">
    <property type="interactions" value="3"/>
</dbReference>
<dbReference type="STRING" id="243276.TP_0371"/>
<dbReference type="EnsemblBacteria" id="AAC65356">
    <property type="protein sequence ID" value="AAC65356"/>
    <property type="gene ID" value="TP_0371"/>
</dbReference>
<dbReference type="KEGG" id="tpa:TP_0371"/>
<dbReference type="eggNOG" id="COG1947">
    <property type="taxonomic scope" value="Bacteria"/>
</dbReference>
<dbReference type="HOGENOM" id="CLU_053057_2_0_12"/>
<dbReference type="OrthoDB" id="9809438at2"/>
<dbReference type="UniPathway" id="UPA00056">
    <property type="reaction ID" value="UER00094"/>
</dbReference>
<dbReference type="Proteomes" id="UP000000811">
    <property type="component" value="Chromosome"/>
</dbReference>
<dbReference type="GO" id="GO:0050515">
    <property type="term" value="F:4-(cytidine 5'-diphospho)-2-C-methyl-D-erythritol kinase activity"/>
    <property type="evidence" value="ECO:0007669"/>
    <property type="project" value="UniProtKB-UniRule"/>
</dbReference>
<dbReference type="GO" id="GO:0005524">
    <property type="term" value="F:ATP binding"/>
    <property type="evidence" value="ECO:0007669"/>
    <property type="project" value="UniProtKB-UniRule"/>
</dbReference>
<dbReference type="GO" id="GO:0019288">
    <property type="term" value="P:isopentenyl diphosphate biosynthetic process, methylerythritol 4-phosphate pathway"/>
    <property type="evidence" value="ECO:0007669"/>
    <property type="project" value="UniProtKB-UniRule"/>
</dbReference>
<dbReference type="GO" id="GO:0016114">
    <property type="term" value="P:terpenoid biosynthetic process"/>
    <property type="evidence" value="ECO:0007669"/>
    <property type="project" value="InterPro"/>
</dbReference>
<dbReference type="Gene3D" id="3.30.230.10">
    <property type="match status" value="1"/>
</dbReference>
<dbReference type="Gene3D" id="3.30.70.890">
    <property type="entry name" value="GHMP kinase, C-terminal domain"/>
    <property type="match status" value="1"/>
</dbReference>
<dbReference type="HAMAP" id="MF_00061">
    <property type="entry name" value="IspE"/>
    <property type="match status" value="1"/>
</dbReference>
<dbReference type="InterPro" id="IPR013750">
    <property type="entry name" value="GHMP_kinase_C_dom"/>
</dbReference>
<dbReference type="InterPro" id="IPR036554">
    <property type="entry name" value="GHMP_kinase_C_sf"/>
</dbReference>
<dbReference type="InterPro" id="IPR006204">
    <property type="entry name" value="GHMP_kinase_N_dom"/>
</dbReference>
<dbReference type="InterPro" id="IPR004424">
    <property type="entry name" value="IspE"/>
</dbReference>
<dbReference type="InterPro" id="IPR020568">
    <property type="entry name" value="Ribosomal_Su5_D2-typ_SF"/>
</dbReference>
<dbReference type="InterPro" id="IPR014721">
    <property type="entry name" value="Ribsml_uS5_D2-typ_fold_subgr"/>
</dbReference>
<dbReference type="NCBIfam" id="TIGR00154">
    <property type="entry name" value="ispE"/>
    <property type="match status" value="1"/>
</dbReference>
<dbReference type="PANTHER" id="PTHR43527">
    <property type="entry name" value="4-DIPHOSPHOCYTIDYL-2-C-METHYL-D-ERYTHRITOL KINASE, CHLOROPLASTIC"/>
    <property type="match status" value="1"/>
</dbReference>
<dbReference type="PANTHER" id="PTHR43527:SF2">
    <property type="entry name" value="4-DIPHOSPHOCYTIDYL-2-C-METHYL-D-ERYTHRITOL KINASE, CHLOROPLASTIC"/>
    <property type="match status" value="1"/>
</dbReference>
<dbReference type="Pfam" id="PF08544">
    <property type="entry name" value="GHMP_kinases_C"/>
    <property type="match status" value="1"/>
</dbReference>
<dbReference type="Pfam" id="PF00288">
    <property type="entry name" value="GHMP_kinases_N"/>
    <property type="match status" value="1"/>
</dbReference>
<dbReference type="PIRSF" id="PIRSF010376">
    <property type="entry name" value="IspE"/>
    <property type="match status" value="1"/>
</dbReference>
<dbReference type="SUPFAM" id="SSF55060">
    <property type="entry name" value="GHMP Kinase, C-terminal domain"/>
    <property type="match status" value="1"/>
</dbReference>
<dbReference type="SUPFAM" id="SSF54211">
    <property type="entry name" value="Ribosomal protein S5 domain 2-like"/>
    <property type="match status" value="1"/>
</dbReference>
<sequence length="291" mass="31592">MQSLSLRAHAKVNMHLWVGARRADGLHSIESVMQRITLADSLSLSRLDIPGRCEVCSPYMALPRENTLTRAYARFCQVTGVHDGVRVRVVKRIPAGSGLGGGSADAAALLCGLDTLFGTTLSARVLREVAYSVGSDVPFFLASQAACVLGGGEQLVPLVPKTGYLGLLVWPGLHSGSAQAYEDLDRLRACGVHAADGEQYSLRGATALSAHYAQDCARWRFFNSLDAPVQRRYPVVALARWDLARAGACFTAMSGSGSXVFGLYRDEEELRRAHKLLAKRWCWCVRVRLCG</sequence>
<feature type="chain" id="PRO_0000189282" description="4-diphosphocytidyl-2-C-methyl-D-erythritol kinase">
    <location>
        <begin position="1"/>
        <end position="291"/>
    </location>
</feature>
<feature type="active site" evidence="1">
    <location>
        <position position="11"/>
    </location>
</feature>
<feature type="active site" evidence="1">
    <location>
        <position position="136"/>
    </location>
</feature>
<feature type="binding site" evidence="1">
    <location>
        <begin position="94"/>
        <end position="104"/>
    </location>
    <ligand>
        <name>ATP</name>
        <dbReference type="ChEBI" id="CHEBI:30616"/>
    </ligand>
</feature>
<keyword id="KW-0067">ATP-binding</keyword>
<keyword id="KW-0414">Isoprene biosynthesis</keyword>
<keyword id="KW-0418">Kinase</keyword>
<keyword id="KW-0547">Nucleotide-binding</keyword>
<keyword id="KW-1185">Reference proteome</keyword>
<keyword id="KW-0808">Transferase</keyword>
<proteinExistence type="inferred from homology"/>
<reference key="1">
    <citation type="journal article" date="1998" name="Science">
        <title>Complete genome sequence of Treponema pallidum, the syphilis spirochete.</title>
        <authorList>
            <person name="Fraser C.M."/>
            <person name="Norris S.J."/>
            <person name="Weinstock G.M."/>
            <person name="White O."/>
            <person name="Sutton G.G."/>
            <person name="Dodson R.J."/>
            <person name="Gwinn M.L."/>
            <person name="Hickey E.K."/>
            <person name="Clayton R.A."/>
            <person name="Ketchum K.A."/>
            <person name="Sodergren E."/>
            <person name="Hardham J.M."/>
            <person name="McLeod M.P."/>
            <person name="Salzberg S.L."/>
            <person name="Peterson J.D."/>
            <person name="Khalak H.G."/>
            <person name="Richardson D.L."/>
            <person name="Howell J.K."/>
            <person name="Chidambaram M."/>
            <person name="Utterback T.R."/>
            <person name="McDonald L.A."/>
            <person name="Artiach P."/>
            <person name="Bowman C."/>
            <person name="Cotton M.D."/>
            <person name="Fujii C."/>
            <person name="Garland S.A."/>
            <person name="Hatch B."/>
            <person name="Horst K."/>
            <person name="Roberts K.M."/>
            <person name="Sandusky M."/>
            <person name="Weidman J.F."/>
            <person name="Smith H.O."/>
            <person name="Venter J.C."/>
        </authorList>
    </citation>
    <scope>NUCLEOTIDE SEQUENCE [LARGE SCALE GENOMIC DNA]</scope>
    <source>
        <strain>Nichols</strain>
    </source>
</reference>
<evidence type="ECO:0000255" key="1">
    <source>
        <dbReference type="HAMAP-Rule" id="MF_00061"/>
    </source>
</evidence>
<accession>O83386</accession>
<protein>
    <recommendedName>
        <fullName evidence="1">4-diphosphocytidyl-2-C-methyl-D-erythritol kinase</fullName>
        <shortName evidence="1">CMK</shortName>
        <ecNumber evidence="1">2.7.1.148</ecNumber>
    </recommendedName>
    <alternativeName>
        <fullName evidence="1">4-(cytidine-5'-diphospho)-2-C-methyl-D-erythritol kinase</fullName>
    </alternativeName>
</protein>
<name>ISPE_TREPA</name>
<comment type="function">
    <text evidence="1">Catalyzes the phosphorylation of the position 2 hydroxy group of 4-diphosphocytidyl-2C-methyl-D-erythritol.</text>
</comment>
<comment type="catalytic activity">
    <reaction evidence="1">
        <text>4-CDP-2-C-methyl-D-erythritol + ATP = 4-CDP-2-C-methyl-D-erythritol 2-phosphate + ADP + H(+)</text>
        <dbReference type="Rhea" id="RHEA:18437"/>
        <dbReference type="ChEBI" id="CHEBI:15378"/>
        <dbReference type="ChEBI" id="CHEBI:30616"/>
        <dbReference type="ChEBI" id="CHEBI:57823"/>
        <dbReference type="ChEBI" id="CHEBI:57919"/>
        <dbReference type="ChEBI" id="CHEBI:456216"/>
        <dbReference type="EC" id="2.7.1.148"/>
    </reaction>
</comment>
<comment type="pathway">
    <text evidence="1">Isoprenoid biosynthesis; isopentenyl diphosphate biosynthesis via DXP pathway; isopentenyl diphosphate from 1-deoxy-D-xylulose 5-phosphate: step 3/6.</text>
</comment>
<comment type="similarity">
    <text evidence="1">Belongs to the GHMP kinase family. IspE subfamily.</text>
</comment>
<gene>
    <name evidence="1" type="primary">ispE</name>
    <name type="ordered locus">TP_0371</name>
</gene>